<protein>
    <recommendedName>
        <fullName evidence="1">Homoserine kinase</fullName>
        <shortName evidence="1">HK</shortName>
        <shortName evidence="1">HSK</shortName>
        <ecNumber evidence="1">2.7.1.39</ecNumber>
    </recommendedName>
</protein>
<accession>Q2KBL3</accession>
<organism>
    <name type="scientific">Rhizobium etli (strain ATCC 51251 / DSM 11541 / JCM 21823 / NBRC 15573 / CFN 42)</name>
    <dbReference type="NCBI Taxonomy" id="347834"/>
    <lineage>
        <taxon>Bacteria</taxon>
        <taxon>Pseudomonadati</taxon>
        <taxon>Pseudomonadota</taxon>
        <taxon>Alphaproteobacteria</taxon>
        <taxon>Hyphomicrobiales</taxon>
        <taxon>Rhizobiaceae</taxon>
        <taxon>Rhizobium/Agrobacterium group</taxon>
        <taxon>Rhizobium</taxon>
    </lineage>
</organism>
<gene>
    <name evidence="1" type="primary">thrB</name>
    <name type="ordered locus">RHE_CH00962</name>
</gene>
<name>KHSE_RHIEC</name>
<comment type="catalytic activity">
    <reaction evidence="1">
        <text>L-homoserine + ATP = O-phospho-L-homoserine + ADP + H(+)</text>
        <dbReference type="Rhea" id="RHEA:13985"/>
        <dbReference type="ChEBI" id="CHEBI:15378"/>
        <dbReference type="ChEBI" id="CHEBI:30616"/>
        <dbReference type="ChEBI" id="CHEBI:57476"/>
        <dbReference type="ChEBI" id="CHEBI:57590"/>
        <dbReference type="ChEBI" id="CHEBI:456216"/>
        <dbReference type="EC" id="2.7.1.39"/>
    </reaction>
</comment>
<comment type="pathway">
    <text evidence="1">Amino-acid biosynthesis; L-threonine biosynthesis; L-threonine from L-aspartate: step 4/5.</text>
</comment>
<comment type="similarity">
    <text evidence="1">Belongs to the pseudomonas-type ThrB family.</text>
</comment>
<dbReference type="EC" id="2.7.1.39" evidence="1"/>
<dbReference type="EMBL" id="CP000133">
    <property type="protein sequence ID" value="ABC89773.1"/>
    <property type="molecule type" value="Genomic_DNA"/>
</dbReference>
<dbReference type="RefSeq" id="WP_011424309.1">
    <property type="nucleotide sequence ID" value="NC_007761.1"/>
</dbReference>
<dbReference type="SMR" id="Q2KBL3"/>
<dbReference type="KEGG" id="ret:RHE_CH00962"/>
<dbReference type="eggNOG" id="COG2334">
    <property type="taxonomic scope" value="Bacteria"/>
</dbReference>
<dbReference type="HOGENOM" id="CLU_053300_1_0_5"/>
<dbReference type="OrthoDB" id="9777460at2"/>
<dbReference type="UniPathway" id="UPA00050">
    <property type="reaction ID" value="UER00064"/>
</dbReference>
<dbReference type="Proteomes" id="UP000001936">
    <property type="component" value="Chromosome"/>
</dbReference>
<dbReference type="GO" id="GO:0005524">
    <property type="term" value="F:ATP binding"/>
    <property type="evidence" value="ECO:0007669"/>
    <property type="project" value="UniProtKB-KW"/>
</dbReference>
<dbReference type="GO" id="GO:0004413">
    <property type="term" value="F:homoserine kinase activity"/>
    <property type="evidence" value="ECO:0007669"/>
    <property type="project" value="UniProtKB-UniRule"/>
</dbReference>
<dbReference type="GO" id="GO:0009088">
    <property type="term" value="P:threonine biosynthetic process"/>
    <property type="evidence" value="ECO:0007669"/>
    <property type="project" value="UniProtKB-UniRule"/>
</dbReference>
<dbReference type="CDD" id="cd05153">
    <property type="entry name" value="HomoserineK_II"/>
    <property type="match status" value="1"/>
</dbReference>
<dbReference type="Gene3D" id="3.90.1200.10">
    <property type="match status" value="1"/>
</dbReference>
<dbReference type="Gene3D" id="3.30.200.20">
    <property type="entry name" value="Phosphorylase Kinase, domain 1"/>
    <property type="match status" value="1"/>
</dbReference>
<dbReference type="HAMAP" id="MF_00301">
    <property type="entry name" value="Homoser_kinase_2"/>
    <property type="match status" value="1"/>
</dbReference>
<dbReference type="InterPro" id="IPR002575">
    <property type="entry name" value="Aminoglycoside_PTrfase"/>
</dbReference>
<dbReference type="InterPro" id="IPR005280">
    <property type="entry name" value="Homoserine_kinase_II"/>
</dbReference>
<dbReference type="InterPro" id="IPR011009">
    <property type="entry name" value="Kinase-like_dom_sf"/>
</dbReference>
<dbReference type="InterPro" id="IPR050249">
    <property type="entry name" value="Pseudomonas-type_ThrB"/>
</dbReference>
<dbReference type="NCBIfam" id="NF003558">
    <property type="entry name" value="PRK05231.1"/>
    <property type="match status" value="1"/>
</dbReference>
<dbReference type="NCBIfam" id="TIGR00938">
    <property type="entry name" value="thrB_alt"/>
    <property type="match status" value="1"/>
</dbReference>
<dbReference type="PANTHER" id="PTHR21064:SF6">
    <property type="entry name" value="AMINOGLYCOSIDE PHOSPHOTRANSFERASE DOMAIN-CONTAINING PROTEIN"/>
    <property type="match status" value="1"/>
</dbReference>
<dbReference type="PANTHER" id="PTHR21064">
    <property type="entry name" value="AMINOGLYCOSIDE PHOSPHOTRANSFERASE DOMAIN-CONTAINING PROTEIN-RELATED"/>
    <property type="match status" value="1"/>
</dbReference>
<dbReference type="Pfam" id="PF01636">
    <property type="entry name" value="APH"/>
    <property type="match status" value="1"/>
</dbReference>
<dbReference type="SUPFAM" id="SSF56112">
    <property type="entry name" value="Protein kinase-like (PK-like)"/>
    <property type="match status" value="1"/>
</dbReference>
<evidence type="ECO:0000255" key="1">
    <source>
        <dbReference type="HAMAP-Rule" id="MF_00301"/>
    </source>
</evidence>
<feature type="chain" id="PRO_0000300801" description="Homoserine kinase">
    <location>
        <begin position="1"/>
        <end position="321"/>
    </location>
</feature>
<reference key="1">
    <citation type="journal article" date="2006" name="Proc. Natl. Acad. Sci. U.S.A.">
        <title>The partitioned Rhizobium etli genome: genetic and metabolic redundancy in seven interacting replicons.</title>
        <authorList>
            <person name="Gonzalez V."/>
            <person name="Santamaria R.I."/>
            <person name="Bustos P."/>
            <person name="Hernandez-Gonzalez I."/>
            <person name="Medrano-Soto A."/>
            <person name="Moreno-Hagelsieb G."/>
            <person name="Janga S.C."/>
            <person name="Ramirez M.A."/>
            <person name="Jimenez-Jacinto V."/>
            <person name="Collado-Vides J."/>
            <person name="Davila G."/>
        </authorList>
    </citation>
    <scope>NUCLEOTIDE SEQUENCE [LARGE SCALE GENOMIC DNA]</scope>
    <source>
        <strain>ATCC 51251 / DSM 11541 / JCM 21823 / NBRC 15573 / CFN 42</strain>
    </source>
</reference>
<proteinExistence type="inferred from homology"/>
<sequence length="321" mass="35842">MAVYTDIAEDDLKWFLTEYDVGTLLSYKGIAEGVENSNFLLHTSKAPLILTLYEKRVEKSDLPFFLGLMQHLSARGLSCPLPLPRRDGALLGSLSGRPAALISFLEGMWLRKPEAKHCREVGRALAEMHVAGEGFELKRPNALSLDGWRGLWEKSEARADEVESGLQGEIRNELDFLAAAWPKSLPSGVIHADLFPDNVFFLGDELSGLIDFYFACNDLLAYDVSICLNAWCFEKDGAYNITKGMAMLEGYQSVRPLSGEEIAALPLLARGSALRFFLTRLYDWLMTPEGAMVTKKDPLEYLHKLRFHRQIGSAAEYGLSL</sequence>
<keyword id="KW-0028">Amino-acid biosynthesis</keyword>
<keyword id="KW-0067">ATP-binding</keyword>
<keyword id="KW-0418">Kinase</keyword>
<keyword id="KW-0547">Nucleotide-binding</keyword>
<keyword id="KW-1185">Reference proteome</keyword>
<keyword id="KW-0791">Threonine biosynthesis</keyword>
<keyword id="KW-0808">Transferase</keyword>